<name>HOXM_CUPNH</name>
<keyword id="KW-0064">Aspartyl protease</keyword>
<keyword id="KW-0378">Hydrolase</keyword>
<keyword id="KW-0479">Metal-binding</keyword>
<keyword id="KW-0533">Nickel</keyword>
<keyword id="KW-0614">Plasmid</keyword>
<keyword id="KW-0645">Protease</keyword>
<keyword id="KW-1185">Reference proteome</keyword>
<gene>
    <name type="primary">hoxM</name>
    <name type="ordered locus">PHG005</name>
</gene>
<reference key="1">
    <citation type="journal article" date="1992" name="J. Bacteriol.">
        <title>A gene complex coding for the membrane-bound hydrogenase of Alcaligenes eutrophus H16.</title>
        <authorList>
            <person name="Kortlueke C."/>
            <person name="Horstmann K."/>
            <person name="Schwartz E."/>
            <person name="Rohde M."/>
            <person name="Binsack R."/>
            <person name="Friedrich B."/>
        </authorList>
    </citation>
    <scope>NUCLEOTIDE SEQUENCE [GENOMIC DNA]</scope>
</reference>
<reference key="2">
    <citation type="journal article" date="2003" name="J. Mol. Biol.">
        <title>Complete nucleotide sequence of pHG1: a Ralstonia eutropha H16 megaplasmid encoding key enzymes of H(2)-based lithoautotrophy and anaerobiosis.</title>
        <authorList>
            <person name="Schwartz E."/>
            <person name="Henne A."/>
            <person name="Cramm R."/>
            <person name="Eitinger T."/>
            <person name="Friedrich B."/>
            <person name="Gottschalk G."/>
        </authorList>
    </citation>
    <scope>NUCLEOTIDE SEQUENCE [LARGE SCALE GENOMIC DNA]</scope>
    <source>
        <strain>ATCC 17699 / DSM 428 / KCTC 22496 / NCIMB 10442 / H16 / Stanier 337</strain>
    </source>
</reference>
<protein>
    <recommendedName>
        <fullName>Hydrogenase expression/formation protein HoxM</fullName>
    </recommendedName>
</protein>
<feature type="chain" id="PRO_0000201935" description="Hydrogenase expression/formation protein HoxM">
    <location>
        <begin position="1"/>
        <end position="202"/>
    </location>
</feature>
<feature type="binding site" evidence="1">
    <location>
        <position position="15"/>
    </location>
    <ligand>
        <name>Ni(2+)</name>
        <dbReference type="ChEBI" id="CHEBI:49786"/>
    </ligand>
</feature>
<feature type="binding site" evidence="1">
    <location>
        <position position="61"/>
    </location>
    <ligand>
        <name>Ni(2+)</name>
        <dbReference type="ChEBI" id="CHEBI:49786"/>
    </ligand>
</feature>
<feature type="binding site" evidence="1">
    <location>
        <position position="92"/>
    </location>
    <ligand>
        <name>Ni(2+)</name>
        <dbReference type="ChEBI" id="CHEBI:49786"/>
    </ligand>
</feature>
<geneLocation type="plasmid">
    <name>megaplasmid pHG1</name>
</geneLocation>
<organism>
    <name type="scientific">Cupriavidus necator (strain ATCC 17699 / DSM 428 / KCTC 22496 / NCIMB 10442 / H16 / Stanier 337)</name>
    <name type="common">Ralstonia eutropha</name>
    <dbReference type="NCBI Taxonomy" id="381666"/>
    <lineage>
        <taxon>Bacteria</taxon>
        <taxon>Pseudomonadati</taxon>
        <taxon>Pseudomonadota</taxon>
        <taxon>Betaproteobacteria</taxon>
        <taxon>Burkholderiales</taxon>
        <taxon>Burkholderiaceae</taxon>
        <taxon>Cupriavidus</taxon>
    </lineage>
</organism>
<evidence type="ECO:0000250" key="1"/>
<evidence type="ECO:0000305" key="2"/>
<comment type="function">
    <text>Absolutely required for hydrogenase activity. Mediates the attachment of hydrogenase to the bacterial membrane; attachment is a requirement for enzymatic activity.</text>
</comment>
<comment type="similarity">
    <text evidence="2">Belongs to the peptidase A31 family.</text>
</comment>
<sequence>MVVAMGIGNVLWADEGFGVRCIETLQQRYQFAPQVCLVDGGTQGLYLIHHVQAASRLLIFDAIDYGLPPGTLRIIEDEAVPKFLGAKKMSLHQTGFQEVLLLAQLTGQYPQQVVLIGCQPEELEDYGGSLRRVMKAAVEDAVEKGADLLRRWGGMPVPRTAELAPAEAVTVPHLALDRYEAERPSPRAACRIGDERFMPQDL</sequence>
<accession>P31909</accession>
<dbReference type="EMBL" id="M96433">
    <property type="protein sequence ID" value="AAA16465.1"/>
    <property type="molecule type" value="Unassigned_DNA"/>
</dbReference>
<dbReference type="EMBL" id="AY305378">
    <property type="protein sequence ID" value="AAP85761.1"/>
    <property type="molecule type" value="Genomic_DNA"/>
</dbReference>
<dbReference type="PIR" id="E43255">
    <property type="entry name" value="E43255"/>
</dbReference>
<dbReference type="SMR" id="P31909"/>
<dbReference type="MEROPS" id="A31.002"/>
<dbReference type="KEGG" id="reh:PHG005"/>
<dbReference type="eggNOG" id="COG0680">
    <property type="taxonomic scope" value="Bacteria"/>
</dbReference>
<dbReference type="HOGENOM" id="CLU_099037_0_1_4"/>
<dbReference type="Proteomes" id="UP000008210">
    <property type="component" value="Plasmid megaplasmid pHG1"/>
</dbReference>
<dbReference type="GO" id="GO:0004190">
    <property type="term" value="F:aspartic-type endopeptidase activity"/>
    <property type="evidence" value="ECO:0007669"/>
    <property type="project" value="UniProtKB-KW"/>
</dbReference>
<dbReference type="GO" id="GO:0008047">
    <property type="term" value="F:enzyme activator activity"/>
    <property type="evidence" value="ECO:0007669"/>
    <property type="project" value="InterPro"/>
</dbReference>
<dbReference type="GO" id="GO:0046872">
    <property type="term" value="F:metal ion binding"/>
    <property type="evidence" value="ECO:0007669"/>
    <property type="project" value="UniProtKB-KW"/>
</dbReference>
<dbReference type="GO" id="GO:0016485">
    <property type="term" value="P:protein processing"/>
    <property type="evidence" value="ECO:0007669"/>
    <property type="project" value="InterPro"/>
</dbReference>
<dbReference type="CDD" id="cd06062">
    <property type="entry name" value="H2MP_MemB-H2up"/>
    <property type="match status" value="1"/>
</dbReference>
<dbReference type="FunFam" id="3.40.50.1450:FF:000002">
    <property type="entry name" value="Hydrogenase 1 maturation protease"/>
    <property type="match status" value="1"/>
</dbReference>
<dbReference type="Gene3D" id="3.40.50.1450">
    <property type="entry name" value="HybD-like"/>
    <property type="match status" value="1"/>
</dbReference>
<dbReference type="InterPro" id="IPR004419">
    <property type="entry name" value="Pept_A31_hyd_express"/>
</dbReference>
<dbReference type="InterPro" id="IPR023430">
    <property type="entry name" value="Pept_HybD-like_dom_sf"/>
</dbReference>
<dbReference type="InterPro" id="IPR000671">
    <property type="entry name" value="Peptidase_A31"/>
</dbReference>
<dbReference type="NCBIfam" id="TIGR00140">
    <property type="entry name" value="hupD"/>
    <property type="match status" value="1"/>
</dbReference>
<dbReference type="NCBIfam" id="TIGR00072">
    <property type="entry name" value="hydrog_prot"/>
    <property type="match status" value="1"/>
</dbReference>
<dbReference type="PANTHER" id="PTHR30302">
    <property type="entry name" value="HYDROGENASE 1 MATURATION PROTEASE"/>
    <property type="match status" value="1"/>
</dbReference>
<dbReference type="PANTHER" id="PTHR30302:SF1">
    <property type="entry name" value="HYDROGENASE 2 MATURATION PROTEASE"/>
    <property type="match status" value="1"/>
</dbReference>
<dbReference type="Pfam" id="PF01750">
    <property type="entry name" value="HycI"/>
    <property type="match status" value="1"/>
</dbReference>
<dbReference type="PRINTS" id="PR00446">
    <property type="entry name" value="HYDRGNUPTAKE"/>
</dbReference>
<dbReference type="SUPFAM" id="SSF53163">
    <property type="entry name" value="HybD-like"/>
    <property type="match status" value="1"/>
</dbReference>
<proteinExistence type="inferred from homology"/>